<sequence>MALLEIIHYPSKILRTISKEVVSFDAKLHQQLDDMHETMIASEGIGLAAIQVGLPLRMLIINLPREDGVQHKEDCLEIINPKFIETGGSMMYREGCLSVPGFYEEVERFEKVKIEYQNRFAEVKVLEASELLAVAIQHEIDHLNGVLFVDKLSILKRKKFEKELKELQKKQKHK</sequence>
<gene>
    <name evidence="1" type="primary">def</name>
    <name type="ordered locus">HPG27_749</name>
</gene>
<reference key="1">
    <citation type="journal article" date="2009" name="J. Bacteriol.">
        <title>The complete genome sequence of Helicobacter pylori strain G27.</title>
        <authorList>
            <person name="Baltrus D.A."/>
            <person name="Amieva M.R."/>
            <person name="Covacci A."/>
            <person name="Lowe T.M."/>
            <person name="Merrell D.S."/>
            <person name="Ottemann K.M."/>
            <person name="Stein M."/>
            <person name="Salama N.R."/>
            <person name="Guillemin K."/>
        </authorList>
    </citation>
    <scope>NUCLEOTIDE SEQUENCE [LARGE SCALE GENOMIC DNA]</scope>
    <source>
        <strain>G27</strain>
    </source>
</reference>
<dbReference type="EC" id="3.5.1.88" evidence="1"/>
<dbReference type="EMBL" id="CP001173">
    <property type="protein sequence ID" value="ACI27504.1"/>
    <property type="molecule type" value="Genomic_DNA"/>
</dbReference>
<dbReference type="RefSeq" id="WP_001185820.1">
    <property type="nucleotide sequence ID" value="NC_011333.1"/>
</dbReference>
<dbReference type="SMR" id="B5Z7F5"/>
<dbReference type="KEGG" id="hpg:HPG27_749"/>
<dbReference type="HOGENOM" id="CLU_061901_2_0_7"/>
<dbReference type="Proteomes" id="UP000001735">
    <property type="component" value="Chromosome"/>
</dbReference>
<dbReference type="GO" id="GO:0046872">
    <property type="term" value="F:metal ion binding"/>
    <property type="evidence" value="ECO:0007669"/>
    <property type="project" value="UniProtKB-KW"/>
</dbReference>
<dbReference type="GO" id="GO:0042586">
    <property type="term" value="F:peptide deformylase activity"/>
    <property type="evidence" value="ECO:0007669"/>
    <property type="project" value="UniProtKB-UniRule"/>
</dbReference>
<dbReference type="GO" id="GO:0043686">
    <property type="term" value="P:co-translational protein modification"/>
    <property type="evidence" value="ECO:0007669"/>
    <property type="project" value="TreeGrafter"/>
</dbReference>
<dbReference type="GO" id="GO:0006412">
    <property type="term" value="P:translation"/>
    <property type="evidence" value="ECO:0007669"/>
    <property type="project" value="UniProtKB-UniRule"/>
</dbReference>
<dbReference type="CDD" id="cd00487">
    <property type="entry name" value="Pep_deformylase"/>
    <property type="match status" value="1"/>
</dbReference>
<dbReference type="FunFam" id="3.90.45.10:FF:000008">
    <property type="entry name" value="Peptide deformylase"/>
    <property type="match status" value="1"/>
</dbReference>
<dbReference type="Gene3D" id="3.90.45.10">
    <property type="entry name" value="Peptide deformylase"/>
    <property type="match status" value="1"/>
</dbReference>
<dbReference type="HAMAP" id="MF_00163">
    <property type="entry name" value="Pep_deformylase"/>
    <property type="match status" value="1"/>
</dbReference>
<dbReference type="InterPro" id="IPR023635">
    <property type="entry name" value="Peptide_deformylase"/>
</dbReference>
<dbReference type="InterPro" id="IPR036821">
    <property type="entry name" value="Peptide_deformylase_sf"/>
</dbReference>
<dbReference type="NCBIfam" id="TIGR00079">
    <property type="entry name" value="pept_deformyl"/>
    <property type="match status" value="1"/>
</dbReference>
<dbReference type="NCBIfam" id="NF001159">
    <property type="entry name" value="PRK00150.1-3"/>
    <property type="match status" value="1"/>
</dbReference>
<dbReference type="PANTHER" id="PTHR10458">
    <property type="entry name" value="PEPTIDE DEFORMYLASE"/>
    <property type="match status" value="1"/>
</dbReference>
<dbReference type="PANTHER" id="PTHR10458:SF22">
    <property type="entry name" value="PEPTIDE DEFORMYLASE"/>
    <property type="match status" value="1"/>
</dbReference>
<dbReference type="Pfam" id="PF01327">
    <property type="entry name" value="Pep_deformylase"/>
    <property type="match status" value="1"/>
</dbReference>
<dbReference type="PIRSF" id="PIRSF004749">
    <property type="entry name" value="Pep_def"/>
    <property type="match status" value="1"/>
</dbReference>
<dbReference type="PRINTS" id="PR01576">
    <property type="entry name" value="PDEFORMYLASE"/>
</dbReference>
<dbReference type="SUPFAM" id="SSF56420">
    <property type="entry name" value="Peptide deformylase"/>
    <property type="match status" value="1"/>
</dbReference>
<feature type="chain" id="PRO_1000097315" description="Peptide deformylase">
    <location>
        <begin position="1"/>
        <end position="174"/>
    </location>
</feature>
<feature type="active site" evidence="1">
    <location>
        <position position="139"/>
    </location>
</feature>
<feature type="binding site" evidence="1">
    <location>
        <position position="96"/>
    </location>
    <ligand>
        <name>Fe cation</name>
        <dbReference type="ChEBI" id="CHEBI:24875"/>
    </ligand>
</feature>
<feature type="binding site" evidence="1">
    <location>
        <position position="138"/>
    </location>
    <ligand>
        <name>Fe cation</name>
        <dbReference type="ChEBI" id="CHEBI:24875"/>
    </ligand>
</feature>
<feature type="binding site" evidence="1">
    <location>
        <position position="142"/>
    </location>
    <ligand>
        <name>Fe cation</name>
        <dbReference type="ChEBI" id="CHEBI:24875"/>
    </ligand>
</feature>
<comment type="function">
    <text evidence="1">Removes the formyl group from the N-terminal Met of newly synthesized proteins. Requires at least a dipeptide for an efficient rate of reaction. N-terminal L-methionine is a prerequisite for activity but the enzyme has broad specificity at other positions.</text>
</comment>
<comment type="catalytic activity">
    <reaction evidence="1">
        <text>N-terminal N-formyl-L-methionyl-[peptide] + H2O = N-terminal L-methionyl-[peptide] + formate</text>
        <dbReference type="Rhea" id="RHEA:24420"/>
        <dbReference type="Rhea" id="RHEA-COMP:10639"/>
        <dbReference type="Rhea" id="RHEA-COMP:10640"/>
        <dbReference type="ChEBI" id="CHEBI:15377"/>
        <dbReference type="ChEBI" id="CHEBI:15740"/>
        <dbReference type="ChEBI" id="CHEBI:49298"/>
        <dbReference type="ChEBI" id="CHEBI:64731"/>
        <dbReference type="EC" id="3.5.1.88"/>
    </reaction>
</comment>
<comment type="cofactor">
    <cofactor evidence="1">
        <name>Fe(2+)</name>
        <dbReference type="ChEBI" id="CHEBI:29033"/>
    </cofactor>
    <text evidence="1">Binds 1 Fe(2+) ion.</text>
</comment>
<comment type="similarity">
    <text evidence="1">Belongs to the polypeptide deformylase family.</text>
</comment>
<protein>
    <recommendedName>
        <fullName evidence="1">Peptide deformylase</fullName>
        <shortName evidence="1">PDF</shortName>
        <ecNumber evidence="1">3.5.1.88</ecNumber>
    </recommendedName>
    <alternativeName>
        <fullName evidence="1">Polypeptide deformylase</fullName>
    </alternativeName>
</protein>
<proteinExistence type="inferred from homology"/>
<evidence type="ECO:0000255" key="1">
    <source>
        <dbReference type="HAMAP-Rule" id="MF_00163"/>
    </source>
</evidence>
<name>DEF_HELPG</name>
<keyword id="KW-0378">Hydrolase</keyword>
<keyword id="KW-0408">Iron</keyword>
<keyword id="KW-0479">Metal-binding</keyword>
<keyword id="KW-0648">Protein biosynthesis</keyword>
<keyword id="KW-1185">Reference proteome</keyword>
<accession>B5Z7F5</accession>
<organism>
    <name type="scientific">Helicobacter pylori (strain G27)</name>
    <dbReference type="NCBI Taxonomy" id="563041"/>
    <lineage>
        <taxon>Bacteria</taxon>
        <taxon>Pseudomonadati</taxon>
        <taxon>Campylobacterota</taxon>
        <taxon>Epsilonproteobacteria</taxon>
        <taxon>Campylobacterales</taxon>
        <taxon>Helicobacteraceae</taxon>
        <taxon>Helicobacter</taxon>
    </lineage>
</organism>